<name>XRN2_CHAGB</name>
<reference key="1">
    <citation type="journal article" date="2015" name="Genome Announc.">
        <title>Draft genome sequence of the cellulolytic fungus Chaetomium globosum.</title>
        <authorList>
            <person name="Cuomo C.A."/>
            <person name="Untereiner W.A."/>
            <person name="Ma L.-J."/>
            <person name="Grabherr M."/>
            <person name="Birren B.W."/>
        </authorList>
    </citation>
    <scope>NUCLEOTIDE SEQUENCE [LARGE SCALE GENOMIC DNA]</scope>
    <source>
        <strain>ATCC 6205 / CBS 148.51 / DSM 1962 / NBRC 6347 / NRRL 1970</strain>
    </source>
</reference>
<organism>
    <name type="scientific">Chaetomium globosum (strain ATCC 6205 / CBS 148.51 / DSM 1962 / NBRC 6347 / NRRL 1970)</name>
    <name type="common">Soil fungus</name>
    <dbReference type="NCBI Taxonomy" id="306901"/>
    <lineage>
        <taxon>Eukaryota</taxon>
        <taxon>Fungi</taxon>
        <taxon>Dikarya</taxon>
        <taxon>Ascomycota</taxon>
        <taxon>Pezizomycotina</taxon>
        <taxon>Sordariomycetes</taxon>
        <taxon>Sordariomycetidae</taxon>
        <taxon>Sordariales</taxon>
        <taxon>Chaetomiaceae</taxon>
        <taxon>Chaetomium</taxon>
    </lineage>
</organism>
<gene>
    <name type="primary">RAT1</name>
    <name type="ORF">CHGG_10308</name>
</gene>
<comment type="function">
    <text evidence="2 3">Possesses 5'-&gt;3' exoribonuclease activity (By similarity). Required for the processing of nuclear mRNA and rRNA precursors. May promote the termination of transcription by RNA polymerase II (By similarity). Essential for vegetative cell growth and chromosome segregation (By similarity).</text>
</comment>
<comment type="subunit">
    <text evidence="2">Interacts with RAI1; the interaction is direct, stabilizes RAT1 protein structure and may stimulate its exoribonuclease activity (By similarity). The interaction also stimulates RAI1 pyrophosphohydrolase activity, probably by recruiting it to mRNA substrates (By similarity).</text>
</comment>
<comment type="subcellular location">
    <subcellularLocation>
        <location evidence="1">Nucleus</location>
    </subcellularLocation>
</comment>
<comment type="similarity">
    <text evidence="7">Belongs to the 5'-3' exonuclease family. XRN2/RAT1 subfamily.</text>
</comment>
<proteinExistence type="inferred from homology"/>
<keyword id="KW-0175">Coiled coil</keyword>
<keyword id="KW-0269">Exonuclease</keyword>
<keyword id="KW-0378">Hydrolase</keyword>
<keyword id="KW-0479">Metal-binding</keyword>
<keyword id="KW-0507">mRNA processing</keyword>
<keyword id="KW-0540">Nuclease</keyword>
<keyword id="KW-0539">Nucleus</keyword>
<keyword id="KW-1185">Reference proteome</keyword>
<keyword id="KW-0698">rRNA processing</keyword>
<keyword id="KW-0804">Transcription</keyword>
<keyword id="KW-0805">Transcription regulation</keyword>
<keyword id="KW-0806">Transcription termination</keyword>
<keyword id="KW-0862">Zinc</keyword>
<keyword id="KW-0863">Zinc-finger</keyword>
<feature type="initiator methionine" description="Removed" evidence="1">
    <location>
        <position position="1"/>
    </location>
</feature>
<feature type="chain" id="PRO_0000249922" description="5'-3' exoribonuclease 2">
    <location>
        <begin position="2"/>
        <end position="1039"/>
    </location>
</feature>
<feature type="zinc finger region" description="CCHC-type" evidence="5">
    <location>
        <begin position="270"/>
        <end position="287"/>
    </location>
</feature>
<feature type="region of interest" description="Disordered" evidence="6">
    <location>
        <begin position="414"/>
        <end position="462"/>
    </location>
</feature>
<feature type="region of interest" description="Disordered" evidence="6">
    <location>
        <begin position="508"/>
        <end position="565"/>
    </location>
</feature>
<feature type="region of interest" description="Disordered" evidence="6">
    <location>
        <begin position="869"/>
        <end position="907"/>
    </location>
</feature>
<feature type="region of interest" description="Disordered" evidence="6">
    <location>
        <begin position="930"/>
        <end position="1039"/>
    </location>
</feature>
<feature type="coiled-coil region" evidence="4">
    <location>
        <begin position="119"/>
        <end position="147"/>
    </location>
</feature>
<feature type="compositionally biased region" description="Basic and acidic residues" evidence="6">
    <location>
        <begin position="414"/>
        <end position="425"/>
    </location>
</feature>
<feature type="compositionally biased region" description="Basic and acidic residues" evidence="6">
    <location>
        <begin position="511"/>
        <end position="524"/>
    </location>
</feature>
<feature type="compositionally biased region" description="Low complexity" evidence="6">
    <location>
        <begin position="542"/>
        <end position="564"/>
    </location>
</feature>
<feature type="compositionally biased region" description="Gly residues" evidence="6">
    <location>
        <begin position="886"/>
        <end position="899"/>
    </location>
</feature>
<feature type="compositionally biased region" description="Low complexity" evidence="6">
    <location>
        <begin position="932"/>
        <end position="943"/>
    </location>
</feature>
<feature type="compositionally biased region" description="Gly residues" evidence="6">
    <location>
        <begin position="968"/>
        <end position="983"/>
    </location>
</feature>
<feature type="compositionally biased region" description="Gly residues" evidence="6">
    <location>
        <begin position="1000"/>
        <end position="1021"/>
    </location>
</feature>
<accession>Q2GNZ6</accession>
<protein>
    <recommendedName>
        <fullName>5'-3' exoribonuclease 2</fullName>
        <ecNumber>3.1.13.-</ecNumber>
    </recommendedName>
</protein>
<dbReference type="EC" id="3.1.13.-"/>
<dbReference type="EMBL" id="CH408035">
    <property type="protein sequence ID" value="EAQ83904.1"/>
    <property type="molecule type" value="Genomic_DNA"/>
</dbReference>
<dbReference type="RefSeq" id="XP_001228235.1">
    <property type="nucleotide sequence ID" value="XM_001228234.1"/>
</dbReference>
<dbReference type="SMR" id="Q2GNZ6"/>
<dbReference type="FunCoup" id="Q2GNZ6">
    <property type="interactions" value="942"/>
</dbReference>
<dbReference type="STRING" id="306901.Q2GNZ6"/>
<dbReference type="GeneID" id="4396518"/>
<dbReference type="VEuPathDB" id="FungiDB:CHGG_10308"/>
<dbReference type="eggNOG" id="KOG2044">
    <property type="taxonomic scope" value="Eukaryota"/>
</dbReference>
<dbReference type="HOGENOM" id="CLU_006038_1_1_1"/>
<dbReference type="InParanoid" id="Q2GNZ6"/>
<dbReference type="OMA" id="ITHDMVV"/>
<dbReference type="OrthoDB" id="372487at2759"/>
<dbReference type="Proteomes" id="UP000001056">
    <property type="component" value="Unassembled WGS sequence"/>
</dbReference>
<dbReference type="GO" id="GO:0005634">
    <property type="term" value="C:nucleus"/>
    <property type="evidence" value="ECO:0007669"/>
    <property type="project" value="UniProtKB-SubCell"/>
</dbReference>
<dbReference type="GO" id="GO:0004534">
    <property type="term" value="F:5'-3' RNA exonuclease activity"/>
    <property type="evidence" value="ECO:0007669"/>
    <property type="project" value="EnsemblFungi"/>
</dbReference>
<dbReference type="GO" id="GO:0003723">
    <property type="term" value="F:RNA binding"/>
    <property type="evidence" value="ECO:0007669"/>
    <property type="project" value="TreeGrafter"/>
</dbReference>
<dbReference type="GO" id="GO:0008270">
    <property type="term" value="F:zinc ion binding"/>
    <property type="evidence" value="ECO:0007669"/>
    <property type="project" value="UniProtKB-KW"/>
</dbReference>
<dbReference type="GO" id="GO:0006353">
    <property type="term" value="P:DNA-templated transcription termination"/>
    <property type="evidence" value="ECO:0007669"/>
    <property type="project" value="UniProtKB-KW"/>
</dbReference>
<dbReference type="GO" id="GO:0006397">
    <property type="term" value="P:mRNA processing"/>
    <property type="evidence" value="ECO:0007669"/>
    <property type="project" value="UniProtKB-KW"/>
</dbReference>
<dbReference type="GO" id="GO:0000956">
    <property type="term" value="P:nuclear-transcribed mRNA catabolic process"/>
    <property type="evidence" value="ECO:0007669"/>
    <property type="project" value="EnsemblFungi"/>
</dbReference>
<dbReference type="GO" id="GO:0051984">
    <property type="term" value="P:positive regulation of chromosome segregation"/>
    <property type="evidence" value="ECO:0007669"/>
    <property type="project" value="EnsemblFungi"/>
</dbReference>
<dbReference type="GO" id="GO:0180037">
    <property type="term" value="P:rapid tRNA decay"/>
    <property type="evidence" value="ECO:0007669"/>
    <property type="project" value="EnsemblFungi"/>
</dbReference>
<dbReference type="GO" id="GO:0006364">
    <property type="term" value="P:rRNA processing"/>
    <property type="evidence" value="ECO:0007669"/>
    <property type="project" value="UniProtKB-KW"/>
</dbReference>
<dbReference type="CDD" id="cd18673">
    <property type="entry name" value="PIN_XRN1-2-like"/>
    <property type="match status" value="1"/>
</dbReference>
<dbReference type="FunFam" id="1.25.40.1050:FF:000002">
    <property type="entry name" value="5'-3' exoribonuclease"/>
    <property type="match status" value="1"/>
</dbReference>
<dbReference type="FunFam" id="3.40.50.12390:FF:000003">
    <property type="entry name" value="5'-3' exoribonuclease"/>
    <property type="match status" value="1"/>
</dbReference>
<dbReference type="FunFam" id="3.40.50.12390:FF:000005">
    <property type="entry name" value="5'-3' exoribonuclease 2"/>
    <property type="match status" value="1"/>
</dbReference>
<dbReference type="Gene3D" id="1.25.40.1050">
    <property type="match status" value="1"/>
</dbReference>
<dbReference type="Gene3D" id="3.40.50.12390">
    <property type="match status" value="2"/>
</dbReference>
<dbReference type="InterPro" id="IPR027073">
    <property type="entry name" value="5_3_exoribonuclease"/>
</dbReference>
<dbReference type="InterPro" id="IPR041412">
    <property type="entry name" value="Xrn1_helical"/>
</dbReference>
<dbReference type="InterPro" id="IPR004859">
    <property type="entry name" value="Xrn1_N"/>
</dbReference>
<dbReference type="InterPro" id="IPR017151">
    <property type="entry name" value="Xrn2/3/4"/>
</dbReference>
<dbReference type="InterPro" id="IPR001878">
    <property type="entry name" value="Znf_CCHC"/>
</dbReference>
<dbReference type="PANTHER" id="PTHR12341:SF41">
    <property type="entry name" value="5'-3' EXORIBONUCLEASE 2"/>
    <property type="match status" value="1"/>
</dbReference>
<dbReference type="PANTHER" id="PTHR12341">
    <property type="entry name" value="5'-&gt;3' EXORIBONUCLEASE"/>
    <property type="match status" value="1"/>
</dbReference>
<dbReference type="Pfam" id="PF17846">
    <property type="entry name" value="XRN_M"/>
    <property type="match status" value="1"/>
</dbReference>
<dbReference type="Pfam" id="PF03159">
    <property type="entry name" value="XRN_N"/>
    <property type="match status" value="1"/>
</dbReference>
<dbReference type="PIRSF" id="PIRSF037239">
    <property type="entry name" value="Exonuclease_Xrn2"/>
    <property type="match status" value="1"/>
</dbReference>
<dbReference type="PROSITE" id="PS50158">
    <property type="entry name" value="ZF_CCHC"/>
    <property type="match status" value="1"/>
</dbReference>
<sequence length="1039" mass="115014">MGIPAAFRWLSTKYPKIISPVVEEKALVMEDGTVVPVDATQPNPNGEEFDNLYLDMNGIVHPCSHPEDRPAPSDEEEMMVEVFKYTERVVNMVRPRKLLMIAVADGVAPRAKMNQQRSRRFRAAQDAKEKEEDKQQLLKMLQKEKGSTAKEEPIETVVKKAFDSNSITPGTPFMDILAASLRYWCAYKLNTDPAWAKMKVIISDATVPGEGEHKIMEFVRSQRNSPEHDPNTRHVIYGLDADLIMLGLATHEPHFRVLREDVFFQQGKARMCKLCGQKGHDERNCRGEAKEKAGEFDEKDKAEPLKPFIWLHVSILREYLAIELNIPNLPFRWDLERAIDDWVFMCFFVGNDFLPHLPALEIRENGIETLMAIWKDNLPVMGGYVTKDGHVDLDRAQYILSGLAKQEDSIFRRRKETEDRREAGFKRRKLNNQQGNNRGGAHDSPLSGRGGRKGAPEANGPPVGMNLFPVASIPKPVITHDMVVNRANVANKSAASVLKSQIQSLVAQTQEKPEGDEPKEENPEAKTPPSALGKRKAELIEEGTATASDAASDTETPATTSSEEGPIDTVRLWEEGYADRYYEQKFKVDAKDIAFRHKVARAYVEGLAWVLMYYFQGCPSWEWFYPYHYAPFAADFVDLGKMKISFEKGRISRPFEQLMSVLPAASRHAIPEVFHDLMTQEDSPILDFYPEDFEIDLNGKKMSWQGIALLPFIEMPRLLDAMKTKSHLLSAEDKARNAPGHDVLLISDSHPGLYEDISSHFYSKKQAVPEFKLDPKRSDGLSGKVRKIEGYVPHGSLVYPLERNTMPDVDYDRSMSVNYDMPTSSHIHKSMLLRGLKMPTPALDRSDVDFVRSKGRGAGRSFGGVPLRNNYNGGGRGDRINYAGGPPRGGGGGGRGRGGYQQDRGYGNGYGGGGGSGGGGGGGGYGNGYGGYQQPAAPGQQSWQPPPPPGYPGFGVGVPPPPPPAHASGGGYNQGYGNQGYGGQNYRNDRYPPGPPPHGGYQGGGYPGGGYQGGGHQGGYQGQYHPPHGQSQDRRHDNS</sequence>
<evidence type="ECO:0000250" key="1"/>
<evidence type="ECO:0000250" key="2">
    <source>
        <dbReference type="UniProtKB" id="P40848"/>
    </source>
</evidence>
<evidence type="ECO:0000250" key="3">
    <source>
        <dbReference type="UniProtKB" id="Q02792"/>
    </source>
</evidence>
<evidence type="ECO:0000255" key="4"/>
<evidence type="ECO:0000255" key="5">
    <source>
        <dbReference type="PROSITE-ProRule" id="PRU00047"/>
    </source>
</evidence>
<evidence type="ECO:0000256" key="6">
    <source>
        <dbReference type="SAM" id="MobiDB-lite"/>
    </source>
</evidence>
<evidence type="ECO:0000305" key="7"/>